<evidence type="ECO:0000250" key="1">
    <source>
        <dbReference type="UniProtKB" id="Q9KSE5"/>
    </source>
</evidence>
<evidence type="ECO:0000255" key="2">
    <source>
        <dbReference type="HAMAP-Rule" id="MF_02212"/>
    </source>
</evidence>
<evidence type="ECO:0000269" key="3">
    <source>
    </source>
</evidence>
<evidence type="ECO:0000303" key="4">
    <source>
    </source>
</evidence>
<evidence type="ECO:0000305" key="5"/>
<evidence type="ECO:0000305" key="6">
    <source>
    </source>
</evidence>
<evidence type="ECO:0000312" key="7">
    <source>
        <dbReference type="EMBL" id="ABK37415.1"/>
    </source>
</evidence>
<evidence type="ECO:0007744" key="8">
    <source>
        <dbReference type="PDB" id="4BF5"/>
    </source>
</evidence>
<evidence type="ECO:0007829" key="9">
    <source>
        <dbReference type="PDB" id="4BF5"/>
    </source>
</evidence>
<protein>
    <recommendedName>
        <fullName evidence="2 6">Broad specificity amino-acid racemase</fullName>
        <ecNumber evidence="2 3">5.1.1.10</ecNumber>
    </recommendedName>
    <alternativeName>
        <fullName evidence="4">Broad spectrum racemase</fullName>
    </alternativeName>
</protein>
<organism>
    <name type="scientific">Aeromonas hydrophila subsp. hydrophila (strain ATCC 7966 / DSM 30187 / BCRC 13018 / CCUG 14551 / JCM 1027 / KCTC 2358 / NCIMB 9240 / NCTC 8049)</name>
    <dbReference type="NCBI Taxonomy" id="380703"/>
    <lineage>
        <taxon>Bacteria</taxon>
        <taxon>Pseudomonadati</taxon>
        <taxon>Pseudomonadota</taxon>
        <taxon>Gammaproteobacteria</taxon>
        <taxon>Aeromonadales</taxon>
        <taxon>Aeromonadaceae</taxon>
        <taxon>Aeromonas</taxon>
    </lineage>
</organism>
<name>BSR_AERHH</name>
<proteinExistence type="evidence at protein level"/>
<comment type="function">
    <text evidence="1 3">Amino-acid racemase able to utilize a broad range of substrates. Reversibly racemizes ten of the 19 natural chiral amino acids known, including both non-beta-branched aliphatic amino acids (Ala, Leu, Met, Ser, Cys, Gln and Asn) and positively charged amino acids (His, Lys and Arg). Is not active on negatively charged (Glu and Asp) or aromatic (Tyr, Trp and Phe) amino acids and displays minimal activity towards beta-branched aliphatic (Ile, Val and Thr) substrates (PubMed:24419381). Enables bacteria to produce and release extracellular non-canonical D-amino acids (NCDAAs) that regulate diverse cellular processes (By similarity).</text>
</comment>
<comment type="catalytic activity">
    <reaction evidence="2 3">
        <text>an L-alpha-amino acid = a D-alpha-amino acid</text>
        <dbReference type="Rhea" id="RHEA:18317"/>
        <dbReference type="ChEBI" id="CHEBI:59869"/>
        <dbReference type="ChEBI" id="CHEBI:59871"/>
        <dbReference type="EC" id="5.1.1.10"/>
    </reaction>
</comment>
<comment type="catalytic activity">
    <reaction evidence="2 3">
        <text>L-lysine = D-lysine</text>
        <dbReference type="Rhea" id="RHEA:22864"/>
        <dbReference type="ChEBI" id="CHEBI:32551"/>
        <dbReference type="ChEBI" id="CHEBI:32557"/>
    </reaction>
</comment>
<comment type="catalytic activity">
    <reaction evidence="2 3">
        <text>L-arginine = D-arginine</text>
        <dbReference type="Rhea" id="RHEA:18069"/>
        <dbReference type="ChEBI" id="CHEBI:32682"/>
        <dbReference type="ChEBI" id="CHEBI:32689"/>
    </reaction>
</comment>
<comment type="catalytic activity">
    <reaction evidence="3">
        <text>L-alanine = D-alanine</text>
        <dbReference type="Rhea" id="RHEA:20249"/>
        <dbReference type="ChEBI" id="CHEBI:57416"/>
        <dbReference type="ChEBI" id="CHEBI:57972"/>
    </reaction>
</comment>
<comment type="catalytic activity">
    <reaction evidence="3">
        <text>L-serine = D-serine</text>
        <dbReference type="Rhea" id="RHEA:10980"/>
        <dbReference type="ChEBI" id="CHEBI:33384"/>
        <dbReference type="ChEBI" id="CHEBI:35247"/>
    </reaction>
</comment>
<comment type="catalytic activity">
    <reaction evidence="3">
        <text>L-methionine = D-methionine</text>
        <dbReference type="Rhea" id="RHEA:12492"/>
        <dbReference type="ChEBI" id="CHEBI:57844"/>
        <dbReference type="ChEBI" id="CHEBI:57932"/>
    </reaction>
</comment>
<comment type="catalytic activity">
    <reaction evidence="3">
        <text>L-leucine = D-leucine</text>
        <dbReference type="Rhea" id="RHEA:59396"/>
        <dbReference type="ChEBI" id="CHEBI:57427"/>
        <dbReference type="ChEBI" id="CHEBI:143079"/>
    </reaction>
</comment>
<comment type="catalytic activity">
    <reaction evidence="3">
        <text>L-cysteine = D-cysteine</text>
        <dbReference type="Rhea" id="RHEA:59272"/>
        <dbReference type="ChEBI" id="CHEBI:35235"/>
        <dbReference type="ChEBI" id="CHEBI:35236"/>
    </reaction>
</comment>
<comment type="catalytic activity">
    <reaction evidence="3">
        <text>L-glutamine = D-glutamine</text>
        <dbReference type="Rhea" id="RHEA:59276"/>
        <dbReference type="ChEBI" id="CHEBI:58000"/>
        <dbReference type="ChEBI" id="CHEBI:58359"/>
    </reaction>
</comment>
<comment type="catalytic activity">
    <reaction evidence="3">
        <text>L-asparagine = D-asparagine</text>
        <dbReference type="Rhea" id="RHEA:59280"/>
        <dbReference type="ChEBI" id="CHEBI:58048"/>
        <dbReference type="ChEBI" id="CHEBI:74337"/>
    </reaction>
</comment>
<comment type="catalytic activity">
    <reaction evidence="3">
        <text>L-histidine = D-histidine</text>
        <dbReference type="Rhea" id="RHEA:59188"/>
        <dbReference type="ChEBI" id="CHEBI:57595"/>
        <dbReference type="ChEBI" id="CHEBI:142967"/>
    </reaction>
</comment>
<comment type="cofactor">
    <cofactor evidence="2 3">
        <name>pyridoxal 5'-phosphate</name>
        <dbReference type="ChEBI" id="CHEBI:597326"/>
    </cofactor>
</comment>
<comment type="subunit">
    <text evidence="6">Homodimer.</text>
</comment>
<comment type="subcellular location">
    <subcellularLocation>
        <location evidence="1 2">Periplasm</location>
    </subcellularLocation>
</comment>
<comment type="similarity">
    <text evidence="2 5">Belongs to the alanine racemase family. Bsr subfamily.</text>
</comment>
<feature type="signal peptide" evidence="2">
    <location>
        <begin position="1"/>
        <end position="21"/>
    </location>
</feature>
<feature type="chain" id="PRO_5002625282" description="Broad specificity amino-acid racemase" evidence="2">
    <location>
        <begin position="22"/>
        <end position="408"/>
    </location>
</feature>
<feature type="active site" description="Proton acceptor" evidence="2">
    <location>
        <position position="74"/>
    </location>
</feature>
<feature type="active site" description="Proton acceptor" evidence="2">
    <location>
        <position position="300"/>
    </location>
</feature>
<feature type="binding site" evidence="2">
    <location>
        <position position="173"/>
    </location>
    <ligand>
        <name>substrate</name>
    </ligand>
</feature>
<feature type="binding site" evidence="2">
    <location>
        <position position="348"/>
    </location>
    <ligand>
        <name>substrate</name>
    </ligand>
</feature>
<feature type="modified residue" description="N6-(pyridoxal phosphate)lysine" evidence="2 3 8">
    <location>
        <position position="74"/>
    </location>
</feature>
<feature type="disulfide bond" evidence="2 8">
    <location>
        <begin position="70"/>
        <end position="96"/>
    </location>
</feature>
<feature type="strand" evidence="9">
    <location>
        <begin position="36"/>
        <end position="38"/>
    </location>
</feature>
<feature type="strand" evidence="9">
    <location>
        <begin position="41"/>
        <end position="47"/>
    </location>
</feature>
<feature type="helix" evidence="9">
    <location>
        <begin position="48"/>
        <end position="62"/>
    </location>
</feature>
<feature type="strand" evidence="9">
    <location>
        <begin position="68"/>
        <end position="72"/>
    </location>
</feature>
<feature type="helix" evidence="9">
    <location>
        <begin position="74"/>
        <end position="78"/>
    </location>
</feature>
<feature type="helix" evidence="9">
    <location>
        <begin position="82"/>
        <end position="92"/>
    </location>
</feature>
<feature type="strand" evidence="9">
    <location>
        <begin position="96"/>
        <end position="101"/>
    </location>
</feature>
<feature type="helix" evidence="9">
    <location>
        <begin position="102"/>
        <end position="110"/>
    </location>
</feature>
<feature type="strand" evidence="9">
    <location>
        <begin position="115"/>
        <end position="121"/>
    </location>
</feature>
<feature type="helix" evidence="9">
    <location>
        <begin position="125"/>
        <end position="130"/>
    </location>
</feature>
<feature type="helix" evidence="9">
    <location>
        <begin position="131"/>
        <end position="134"/>
    </location>
</feature>
<feature type="strand" evidence="9">
    <location>
        <begin position="137"/>
        <end position="140"/>
    </location>
</feature>
<feature type="helix" evidence="9">
    <location>
        <begin position="143"/>
        <end position="155"/>
    </location>
</feature>
<feature type="strand" evidence="9">
    <location>
        <begin position="160"/>
        <end position="166"/>
    </location>
</feature>
<feature type="helix" evidence="9">
    <location>
        <begin position="181"/>
        <end position="191"/>
    </location>
</feature>
<feature type="strand" evidence="9">
    <location>
        <begin position="196"/>
        <end position="202"/>
    </location>
</feature>
<feature type="helix" evidence="9">
    <location>
        <begin position="210"/>
        <end position="230"/>
    </location>
</feature>
<feature type="helix" evidence="9">
    <location>
        <begin position="235"/>
        <end position="237"/>
    </location>
</feature>
<feature type="strand" evidence="9">
    <location>
        <begin position="239"/>
        <end position="241"/>
    </location>
</feature>
<feature type="helix" evidence="9">
    <location>
        <begin position="245"/>
        <end position="250"/>
    </location>
</feature>
<feature type="helix" evidence="9">
    <location>
        <begin position="252"/>
        <end position="254"/>
    </location>
</feature>
<feature type="strand" evidence="9">
    <location>
        <begin position="256"/>
        <end position="259"/>
    </location>
</feature>
<feature type="helix" evidence="9">
    <location>
        <begin position="263"/>
        <end position="266"/>
    </location>
</feature>
<feature type="strand" evidence="9">
    <location>
        <begin position="280"/>
        <end position="285"/>
    </location>
</feature>
<feature type="strand" evidence="9">
    <location>
        <begin position="288"/>
        <end position="292"/>
    </location>
</feature>
<feature type="strand" evidence="9">
    <location>
        <begin position="297"/>
        <end position="299"/>
    </location>
</feature>
<feature type="helix" evidence="9">
    <location>
        <begin position="300"/>
        <end position="302"/>
    </location>
</feature>
<feature type="strand" evidence="9">
    <location>
        <begin position="310"/>
        <end position="316"/>
    </location>
</feature>
<feature type="helix" evidence="9">
    <location>
        <begin position="319"/>
        <end position="321"/>
    </location>
</feature>
<feature type="strand" evidence="9">
    <location>
        <begin position="332"/>
        <end position="335"/>
    </location>
</feature>
<feature type="strand" evidence="9">
    <location>
        <begin position="338"/>
        <end position="344"/>
    </location>
</feature>
<feature type="strand" evidence="9">
    <location>
        <begin position="351"/>
        <end position="354"/>
    </location>
</feature>
<feature type="strand" evidence="9">
    <location>
        <begin position="358"/>
        <end position="360"/>
    </location>
</feature>
<feature type="strand" evidence="9">
    <location>
        <begin position="366"/>
        <end position="373"/>
    </location>
</feature>
<feature type="strand" evidence="9">
    <location>
        <begin position="376"/>
        <end position="378"/>
    </location>
</feature>
<feature type="helix" evidence="9">
    <location>
        <begin position="380"/>
        <end position="387"/>
    </location>
</feature>
<feature type="helix" evidence="9">
    <location>
        <begin position="392"/>
        <end position="401"/>
    </location>
</feature>
<feature type="strand" evidence="9">
    <location>
        <begin position="404"/>
        <end position="407"/>
    </location>
</feature>
<reference key="1">
    <citation type="journal article" date="2006" name="J. Bacteriol.">
        <title>Genome sequence of Aeromonas hydrophila ATCC 7966T: jack of all trades.</title>
        <authorList>
            <person name="Seshadri R."/>
            <person name="Joseph S.W."/>
            <person name="Chopra A.K."/>
            <person name="Sha J."/>
            <person name="Shaw J."/>
            <person name="Graf J."/>
            <person name="Haft D.H."/>
            <person name="Wu M."/>
            <person name="Ren Q."/>
            <person name="Rosovitz M.J."/>
            <person name="Madupu R."/>
            <person name="Tallon L."/>
            <person name="Kim M."/>
            <person name="Jin S."/>
            <person name="Vuong H."/>
            <person name="Stine O.C."/>
            <person name="Ali A."/>
            <person name="Horneman A.J."/>
            <person name="Heidelberg J.F."/>
        </authorList>
    </citation>
    <scope>NUCLEOTIDE SEQUENCE [LARGE SCALE GENOMIC DNA]</scope>
    <source>
        <strain>ATCC 7966 / DSM 30187 / BCRC 13018 / CCUG 14551 / JCM 1027 / KCTC 2358 / NCIMB 9240 / NCTC 8049</strain>
    </source>
</reference>
<reference evidence="8" key="2">
    <citation type="journal article" date="2014" name="Acta Crystallogr. D">
        <title>Structural basis for the broad specificity of a new family of amino-acid racemases.</title>
        <authorList>
            <person name="Espaillat A."/>
            <person name="Carrasco-Lopez C."/>
            <person name="Bernardo-Garcia N."/>
            <person name="Pietrosemoli N."/>
            <person name="Otero L.H."/>
            <person name="Alvarez L."/>
            <person name="de Pedro M.A."/>
            <person name="Pazos F."/>
            <person name="Davis B.M."/>
            <person name="Waldor M.K."/>
            <person name="Hermoso J.A."/>
            <person name="Cava F."/>
        </authorList>
    </citation>
    <scope>X-RAY CRYSTALLOGRAPHY (1.45 ANGSTROMS) IN COMPLEX WITH PYRIDOXAL PHOSPHATE</scope>
    <scope>FUNCTION</scope>
    <scope>CATALYTIC ACTIVITY</scope>
    <scope>COFACTOR</scope>
    <scope>SUBSTRATE SPECIFICITY</scope>
    <scope>DISULFIDE BOND</scope>
    <scope>PYRIDOXAL PHOSPHATE AT LYS-74</scope>
</reference>
<gene>
    <name evidence="4" type="primary">bsr</name>
    <name evidence="7" type="synonym">alr-3</name>
    <name evidence="7" type="ordered locus">AHA_2607</name>
</gene>
<keyword id="KW-0002">3D-structure</keyword>
<keyword id="KW-1015">Disulfide bond</keyword>
<keyword id="KW-0413">Isomerase</keyword>
<keyword id="KW-0574">Periplasm</keyword>
<keyword id="KW-0663">Pyridoxal phosphate</keyword>
<keyword id="KW-1185">Reference proteome</keyword>
<keyword id="KW-0732">Signal</keyword>
<accession>A0KLG5</accession>
<dbReference type="EC" id="5.1.1.10" evidence="2 3"/>
<dbReference type="EMBL" id="CP000462">
    <property type="protein sequence ID" value="ABK37415.1"/>
    <property type="molecule type" value="Genomic_DNA"/>
</dbReference>
<dbReference type="RefSeq" id="YP_857116.1">
    <property type="nucleotide sequence ID" value="NC_008570.1"/>
</dbReference>
<dbReference type="PDB" id="4BF5">
    <property type="method" value="X-ray"/>
    <property type="resolution" value="1.45 A"/>
    <property type="chains" value="A/B=1-408"/>
</dbReference>
<dbReference type="PDBsum" id="4BF5"/>
<dbReference type="SMR" id="A0KLG5"/>
<dbReference type="STRING" id="380703.AHA_2607"/>
<dbReference type="EnsemblBacteria" id="ABK37415">
    <property type="protein sequence ID" value="ABK37415"/>
    <property type="gene ID" value="AHA_2607"/>
</dbReference>
<dbReference type="GeneID" id="4487471"/>
<dbReference type="KEGG" id="aha:AHA_2607"/>
<dbReference type="PATRIC" id="fig|380703.7.peg.2608"/>
<dbReference type="eggNOG" id="COG0787">
    <property type="taxonomic scope" value="Bacteria"/>
</dbReference>
<dbReference type="HOGENOM" id="CLU_028393_2_2_6"/>
<dbReference type="OrthoDB" id="9813814at2"/>
<dbReference type="EvolutionaryTrace" id="A0KLG5"/>
<dbReference type="Proteomes" id="UP000000756">
    <property type="component" value="Chromosome"/>
</dbReference>
<dbReference type="GO" id="GO:0005829">
    <property type="term" value="C:cytosol"/>
    <property type="evidence" value="ECO:0007669"/>
    <property type="project" value="TreeGrafter"/>
</dbReference>
<dbReference type="GO" id="GO:0042597">
    <property type="term" value="C:periplasmic space"/>
    <property type="evidence" value="ECO:0007669"/>
    <property type="project" value="UniProtKB-SubCell"/>
</dbReference>
<dbReference type="GO" id="GO:0008784">
    <property type="term" value="F:alanine racemase activity"/>
    <property type="evidence" value="ECO:0007669"/>
    <property type="project" value="InterPro"/>
</dbReference>
<dbReference type="GO" id="GO:0047679">
    <property type="term" value="F:arginine racemase activity"/>
    <property type="evidence" value="ECO:0007669"/>
    <property type="project" value="RHEA"/>
</dbReference>
<dbReference type="GO" id="GO:0018113">
    <property type="term" value="F:lysine racemase activity"/>
    <property type="evidence" value="ECO:0007669"/>
    <property type="project" value="RHEA"/>
</dbReference>
<dbReference type="GO" id="GO:0018111">
    <property type="term" value="F:methionine racemase activity"/>
    <property type="evidence" value="ECO:0007669"/>
    <property type="project" value="RHEA"/>
</dbReference>
<dbReference type="GO" id="GO:0030170">
    <property type="term" value="F:pyridoxal phosphate binding"/>
    <property type="evidence" value="ECO:0007669"/>
    <property type="project" value="UniProtKB-UniRule"/>
</dbReference>
<dbReference type="GO" id="GO:0030378">
    <property type="term" value="F:serine racemase activity"/>
    <property type="evidence" value="ECO:0007669"/>
    <property type="project" value="RHEA"/>
</dbReference>
<dbReference type="CDD" id="cd06826">
    <property type="entry name" value="PLPDE_III_AR2"/>
    <property type="match status" value="1"/>
</dbReference>
<dbReference type="Gene3D" id="3.20.20.10">
    <property type="entry name" value="Alanine racemase"/>
    <property type="match status" value="1"/>
</dbReference>
<dbReference type="Gene3D" id="2.40.37.10">
    <property type="entry name" value="Lyase, Ornithine Decarboxylase, Chain A, domain 1"/>
    <property type="match status" value="1"/>
</dbReference>
<dbReference type="HAMAP" id="MF_02212">
    <property type="entry name" value="Bsr_racemase"/>
    <property type="match status" value="1"/>
</dbReference>
<dbReference type="InterPro" id="IPR000821">
    <property type="entry name" value="Ala_racemase"/>
</dbReference>
<dbReference type="InterPro" id="IPR009006">
    <property type="entry name" value="Ala_racemase/Decarboxylase_C"/>
</dbReference>
<dbReference type="InterPro" id="IPR011079">
    <property type="entry name" value="Ala_racemase_C"/>
</dbReference>
<dbReference type="InterPro" id="IPR001608">
    <property type="entry name" value="Ala_racemase_N"/>
</dbReference>
<dbReference type="InterPro" id="IPR020622">
    <property type="entry name" value="Ala_racemase_pyridoxalP-BS"/>
</dbReference>
<dbReference type="InterPro" id="IPR029066">
    <property type="entry name" value="PLP-binding_barrel"/>
</dbReference>
<dbReference type="InterPro" id="IPR043698">
    <property type="entry name" value="Racemase_Bsr/Lyr"/>
</dbReference>
<dbReference type="NCBIfam" id="TIGR00492">
    <property type="entry name" value="alr"/>
    <property type="match status" value="1"/>
</dbReference>
<dbReference type="NCBIfam" id="NF009879">
    <property type="entry name" value="PRK13340.1-4"/>
    <property type="match status" value="1"/>
</dbReference>
<dbReference type="PANTHER" id="PTHR30511">
    <property type="entry name" value="ALANINE RACEMASE"/>
    <property type="match status" value="1"/>
</dbReference>
<dbReference type="PANTHER" id="PTHR30511:SF0">
    <property type="entry name" value="ALANINE RACEMASE, CATABOLIC-RELATED"/>
    <property type="match status" value="1"/>
</dbReference>
<dbReference type="Pfam" id="PF00842">
    <property type="entry name" value="Ala_racemase_C"/>
    <property type="match status" value="1"/>
</dbReference>
<dbReference type="Pfam" id="PF01168">
    <property type="entry name" value="Ala_racemase_N"/>
    <property type="match status" value="1"/>
</dbReference>
<dbReference type="PRINTS" id="PR00992">
    <property type="entry name" value="ALARACEMASE"/>
</dbReference>
<dbReference type="SMART" id="SM01005">
    <property type="entry name" value="Ala_racemase_C"/>
    <property type="match status" value="1"/>
</dbReference>
<dbReference type="SUPFAM" id="SSF50621">
    <property type="entry name" value="Alanine racemase C-terminal domain-like"/>
    <property type="match status" value="1"/>
</dbReference>
<dbReference type="SUPFAM" id="SSF51419">
    <property type="entry name" value="PLP-binding barrel"/>
    <property type="match status" value="1"/>
</dbReference>
<dbReference type="PROSITE" id="PS00395">
    <property type="entry name" value="ALANINE_RACEMASE"/>
    <property type="match status" value="1"/>
</dbReference>
<sequence length="408" mass="44575">MHKKTLLATLILGLLAGQAVAAPYLPLASDHRNGEVQTASNAWLEVDLGAFEHNIQTLKDRLGDKGPKICAIMKADAYGHGIDLLVPSVVKAGIPCIGIASNEEARVAREKGFTGRLMRVRAATPAEVEQALPYKMEELIGSLVSAQGIADIAQRHHTNIPVHIALNSAGMSRNGIDLRLADSKEDALAMLKLKGITPVGIMTHFPVEEKEDVKMGLAQFKLDSQWLLEAGKLDRSKITIHAANSFATLEVPDAYFDMVRPGGLLYGDSIPSYTEYKRVMAFKTQVASVNHYPAGNTVGYDRTFTLKRDSWLANLPLGYSDGYRRALSNKAYVLIQGQKVPVVGKTSMNTIMVDVTDLKGVKPGDEVVLFGRQGEAEVKQADLEEYNGALLADMYTIWGYTNPKKIKR</sequence>